<organism>
    <name type="scientific">Methanosarcina acetivorans (strain ATCC 35395 / DSM 2834 / JCM 12185 / C2A)</name>
    <dbReference type="NCBI Taxonomy" id="188937"/>
    <lineage>
        <taxon>Archaea</taxon>
        <taxon>Methanobacteriati</taxon>
        <taxon>Methanobacteriota</taxon>
        <taxon>Stenosarchaea group</taxon>
        <taxon>Methanomicrobia</taxon>
        <taxon>Methanosarcinales</taxon>
        <taxon>Methanosarcinaceae</taxon>
        <taxon>Methanosarcina</taxon>
    </lineage>
</organism>
<accession>Q8TQR2</accession>
<protein>
    <recommendedName>
        <fullName evidence="1">Chaperone protein DnaK</fullName>
    </recommendedName>
    <alternativeName>
        <fullName evidence="1">HSP70</fullName>
    </alternativeName>
    <alternativeName>
        <fullName evidence="1">Heat shock 70 kDa protein</fullName>
    </alternativeName>
    <alternativeName>
        <fullName evidence="1">Heat shock protein 70</fullName>
    </alternativeName>
</protein>
<keyword id="KW-0067">ATP-binding</keyword>
<keyword id="KW-0143">Chaperone</keyword>
<keyword id="KW-0547">Nucleotide-binding</keyword>
<keyword id="KW-1185">Reference proteome</keyword>
<proteinExistence type="inferred from homology"/>
<dbReference type="EMBL" id="AE010299">
    <property type="protein sequence ID" value="AAM04892.1"/>
    <property type="molecule type" value="Genomic_DNA"/>
</dbReference>
<dbReference type="RefSeq" id="WP_011021492.1">
    <property type="nucleotide sequence ID" value="NC_003552.1"/>
</dbReference>
<dbReference type="SMR" id="Q8TQR2"/>
<dbReference type="STRING" id="188937.MA_1478"/>
<dbReference type="EnsemblBacteria" id="AAM04892">
    <property type="protein sequence ID" value="AAM04892"/>
    <property type="gene ID" value="MA_1478"/>
</dbReference>
<dbReference type="GeneID" id="1473366"/>
<dbReference type="KEGG" id="mac:MA_1478"/>
<dbReference type="HOGENOM" id="CLU_005965_2_4_2"/>
<dbReference type="InParanoid" id="Q8TQR2"/>
<dbReference type="OrthoDB" id="9944at2157"/>
<dbReference type="PhylomeDB" id="Q8TQR2"/>
<dbReference type="Proteomes" id="UP000002487">
    <property type="component" value="Chromosome"/>
</dbReference>
<dbReference type="GO" id="GO:0005524">
    <property type="term" value="F:ATP binding"/>
    <property type="evidence" value="ECO:0007669"/>
    <property type="project" value="UniProtKB-UniRule"/>
</dbReference>
<dbReference type="GO" id="GO:0016887">
    <property type="term" value="F:ATP hydrolysis activity"/>
    <property type="evidence" value="ECO:0000318"/>
    <property type="project" value="GO_Central"/>
</dbReference>
<dbReference type="GO" id="GO:0140662">
    <property type="term" value="F:ATP-dependent protein folding chaperone"/>
    <property type="evidence" value="ECO:0007669"/>
    <property type="project" value="InterPro"/>
</dbReference>
<dbReference type="GO" id="GO:0031072">
    <property type="term" value="F:heat shock protein binding"/>
    <property type="evidence" value="ECO:0000318"/>
    <property type="project" value="GO_Central"/>
</dbReference>
<dbReference type="GO" id="GO:0044183">
    <property type="term" value="F:protein folding chaperone"/>
    <property type="evidence" value="ECO:0000318"/>
    <property type="project" value="GO_Central"/>
</dbReference>
<dbReference type="GO" id="GO:0051082">
    <property type="term" value="F:unfolded protein binding"/>
    <property type="evidence" value="ECO:0007669"/>
    <property type="project" value="InterPro"/>
</dbReference>
<dbReference type="GO" id="GO:0051085">
    <property type="term" value="P:chaperone cofactor-dependent protein refolding"/>
    <property type="evidence" value="ECO:0000318"/>
    <property type="project" value="GO_Central"/>
</dbReference>
<dbReference type="GO" id="GO:0042026">
    <property type="term" value="P:protein refolding"/>
    <property type="evidence" value="ECO:0000318"/>
    <property type="project" value="GO_Central"/>
</dbReference>
<dbReference type="CDD" id="cd10234">
    <property type="entry name" value="ASKHA_NBD_HSP70_DnaK-like"/>
    <property type="match status" value="1"/>
</dbReference>
<dbReference type="FunFam" id="2.60.34.10:FF:000014">
    <property type="entry name" value="Chaperone protein DnaK HSP70"/>
    <property type="match status" value="1"/>
</dbReference>
<dbReference type="FunFam" id="1.20.1270.10:FF:000001">
    <property type="entry name" value="Molecular chaperone DnaK"/>
    <property type="match status" value="1"/>
</dbReference>
<dbReference type="FunFam" id="3.30.420.40:FF:000071">
    <property type="entry name" value="Molecular chaperone DnaK"/>
    <property type="match status" value="1"/>
</dbReference>
<dbReference type="FunFam" id="3.90.640.10:FF:000003">
    <property type="entry name" value="Molecular chaperone DnaK"/>
    <property type="match status" value="1"/>
</dbReference>
<dbReference type="Gene3D" id="1.20.1270.10">
    <property type="match status" value="1"/>
</dbReference>
<dbReference type="Gene3D" id="3.30.420.40">
    <property type="match status" value="2"/>
</dbReference>
<dbReference type="Gene3D" id="3.90.640.10">
    <property type="entry name" value="Actin, Chain A, domain 4"/>
    <property type="match status" value="1"/>
</dbReference>
<dbReference type="Gene3D" id="2.60.34.10">
    <property type="entry name" value="Substrate Binding Domain Of DNAk, Chain A, domain 1"/>
    <property type="match status" value="1"/>
</dbReference>
<dbReference type="HAMAP" id="MF_00332">
    <property type="entry name" value="DnaK"/>
    <property type="match status" value="1"/>
</dbReference>
<dbReference type="InterPro" id="IPR043129">
    <property type="entry name" value="ATPase_NBD"/>
</dbReference>
<dbReference type="InterPro" id="IPR012725">
    <property type="entry name" value="Chaperone_DnaK"/>
</dbReference>
<dbReference type="InterPro" id="IPR018181">
    <property type="entry name" value="Heat_shock_70_CS"/>
</dbReference>
<dbReference type="InterPro" id="IPR029048">
    <property type="entry name" value="HSP70_C_sf"/>
</dbReference>
<dbReference type="InterPro" id="IPR029047">
    <property type="entry name" value="HSP70_peptide-bd_sf"/>
</dbReference>
<dbReference type="InterPro" id="IPR013126">
    <property type="entry name" value="Hsp_70_fam"/>
</dbReference>
<dbReference type="NCBIfam" id="NF001413">
    <property type="entry name" value="PRK00290.1"/>
    <property type="match status" value="1"/>
</dbReference>
<dbReference type="NCBIfam" id="TIGR02350">
    <property type="entry name" value="prok_dnaK"/>
    <property type="match status" value="1"/>
</dbReference>
<dbReference type="PANTHER" id="PTHR19375">
    <property type="entry name" value="HEAT SHOCK PROTEIN 70KDA"/>
    <property type="match status" value="1"/>
</dbReference>
<dbReference type="Pfam" id="PF00012">
    <property type="entry name" value="HSP70"/>
    <property type="match status" value="1"/>
</dbReference>
<dbReference type="PRINTS" id="PR00301">
    <property type="entry name" value="HEATSHOCK70"/>
</dbReference>
<dbReference type="SUPFAM" id="SSF53067">
    <property type="entry name" value="Actin-like ATPase domain"/>
    <property type="match status" value="2"/>
</dbReference>
<dbReference type="SUPFAM" id="SSF100934">
    <property type="entry name" value="Heat shock protein 70kD (HSP70), C-terminal subdomain"/>
    <property type="match status" value="1"/>
</dbReference>
<dbReference type="SUPFAM" id="SSF100920">
    <property type="entry name" value="Heat shock protein 70kD (HSP70), peptide-binding domain"/>
    <property type="match status" value="1"/>
</dbReference>
<dbReference type="PROSITE" id="PS00297">
    <property type="entry name" value="HSP70_1"/>
    <property type="match status" value="1"/>
</dbReference>
<dbReference type="PROSITE" id="PS00329">
    <property type="entry name" value="HSP70_2"/>
    <property type="match status" value="1"/>
</dbReference>
<dbReference type="PROSITE" id="PS01036">
    <property type="entry name" value="HSP70_3"/>
    <property type="match status" value="1"/>
</dbReference>
<reference key="1">
    <citation type="journal article" date="2002" name="Genome Res.">
        <title>The genome of Methanosarcina acetivorans reveals extensive metabolic and physiological diversity.</title>
        <authorList>
            <person name="Galagan J.E."/>
            <person name="Nusbaum C."/>
            <person name="Roy A."/>
            <person name="Endrizzi M.G."/>
            <person name="Macdonald P."/>
            <person name="FitzHugh W."/>
            <person name="Calvo S."/>
            <person name="Engels R."/>
            <person name="Smirnov S."/>
            <person name="Atnoor D."/>
            <person name="Brown A."/>
            <person name="Allen N."/>
            <person name="Naylor J."/>
            <person name="Stange-Thomann N."/>
            <person name="DeArellano K."/>
            <person name="Johnson R."/>
            <person name="Linton L."/>
            <person name="McEwan P."/>
            <person name="McKernan K."/>
            <person name="Talamas J."/>
            <person name="Tirrell A."/>
            <person name="Ye W."/>
            <person name="Zimmer A."/>
            <person name="Barber R.D."/>
            <person name="Cann I."/>
            <person name="Graham D.E."/>
            <person name="Grahame D.A."/>
            <person name="Guss A.M."/>
            <person name="Hedderich R."/>
            <person name="Ingram-Smith C."/>
            <person name="Kuettner H.C."/>
            <person name="Krzycki J.A."/>
            <person name="Leigh J.A."/>
            <person name="Li W."/>
            <person name="Liu J."/>
            <person name="Mukhopadhyay B."/>
            <person name="Reeve J.N."/>
            <person name="Smith K."/>
            <person name="Springer T.A."/>
            <person name="Umayam L.A."/>
            <person name="White O."/>
            <person name="White R.H."/>
            <person name="de Macario E.C."/>
            <person name="Ferry J.G."/>
            <person name="Jarrell K.F."/>
            <person name="Jing H."/>
            <person name="Macario A.J.L."/>
            <person name="Paulsen I.T."/>
            <person name="Pritchett M."/>
            <person name="Sowers K.R."/>
            <person name="Swanson R.V."/>
            <person name="Zinder S.H."/>
            <person name="Lander E."/>
            <person name="Metcalf W.W."/>
            <person name="Birren B."/>
        </authorList>
    </citation>
    <scope>NUCLEOTIDE SEQUENCE [LARGE SCALE GENOMIC DNA]</scope>
    <source>
        <strain>ATCC 35395 / DSM 2834 / JCM 12185 / C2A</strain>
    </source>
</reference>
<gene>
    <name evidence="1" type="primary">dnaK</name>
    <name type="synonym">hsp70</name>
    <name type="ordered locus">MA_1478</name>
</gene>
<comment type="function">
    <text evidence="1">Acts as a chaperone.</text>
</comment>
<comment type="similarity">
    <text evidence="1">Belongs to the heat shock protein 70 family.</text>
</comment>
<feature type="chain" id="PRO_0000078597" description="Chaperone protein DnaK">
    <location>
        <begin position="1"/>
        <end position="617"/>
    </location>
</feature>
<feature type="region of interest" description="Disordered" evidence="2">
    <location>
        <begin position="579"/>
        <end position="617"/>
    </location>
</feature>
<feature type="compositionally biased region" description="Low complexity" evidence="2">
    <location>
        <begin position="580"/>
        <end position="594"/>
    </location>
</feature>
<feature type="compositionally biased region" description="Acidic residues" evidence="2">
    <location>
        <begin position="602"/>
        <end position="617"/>
    </location>
</feature>
<evidence type="ECO:0000255" key="1">
    <source>
        <dbReference type="HAMAP-Rule" id="MF_00332"/>
    </source>
</evidence>
<evidence type="ECO:0000256" key="2">
    <source>
        <dbReference type="SAM" id="MobiDB-lite"/>
    </source>
</evidence>
<sequence length="617" mass="66209">MAKILGIDLGTTNSCMAVMEGGDAVVLPNAEGSRTTPSVVGFSKKGEKLVGQVAKRQAISNPENTVYSIKRHMGEANYKVTLNGKTYTPQEISAMILQKLKTEAEAYLGETIKQAVITVPAYFNDAQRQATKDAGSIAGLEVLRIINEPTAASLAYGLDKGDVDQKILVYDLGGGTFDVSILELGGGVFEVKSTSGDTHLGGDDFDQRVIDHLLAEFKKTEGIDLSKDKAILQRLKDAAEKAKIELSGVTVTNINLPFLTVGPDGEPKHMDIDLTRAQFQKMTEDLLEKTLVSMRRALSDSKLTPNDLDKVILVGGATRMPAVVELVENFTGKKPYKNINPDEAVAIGAAIQAGVLGGEVKDVLLLDVTPLTLGIETLGGIATPLIQRNTTIPTKKSQIFSTAADNQPSVEIHVLQGERGIASENKTLGRFTLDGIPPAPRGIPQIEVAFDIDANGILHVNAKDLGTGKEQSISIQKPGGLSDAEIERMVKDAELHAEEDKKRKEEVETRNNAEALINAAEKTIKEAGDVATEDQKSKVNAAIEDLKKALEGKDTEEVKAKTEALQEAVYPISTAMYQKAQQEAQQASGEAGSADARGPDETVVDADYEVVDDEKRK</sequence>
<name>DNAK_METAC</name>